<proteinExistence type="evidence at protein level"/>
<evidence type="ECO:0000255" key="1"/>
<evidence type="ECO:0000256" key="2">
    <source>
        <dbReference type="SAM" id="MobiDB-lite"/>
    </source>
</evidence>
<evidence type="ECO:0000269" key="3">
    <source>
    </source>
</evidence>
<evidence type="ECO:0000269" key="4">
    <source>
    </source>
</evidence>
<evidence type="ECO:0000269" key="5">
    <source>
    </source>
</evidence>
<evidence type="ECO:0000303" key="6">
    <source>
    </source>
</evidence>
<evidence type="ECO:0000303" key="7">
    <source>
    </source>
</evidence>
<evidence type="ECO:0000303" key="8">
    <source>
    </source>
</evidence>
<evidence type="ECO:0000305" key="9"/>
<evidence type="ECO:0000312" key="10">
    <source>
        <dbReference type="HGNC" id="HGNC:30299"/>
    </source>
</evidence>
<evidence type="ECO:0007744" key="11">
    <source>
    </source>
</evidence>
<evidence type="ECO:0007744" key="12">
    <source>
    </source>
</evidence>
<evidence type="ECO:0007744" key="13">
    <source>
    </source>
</evidence>
<evidence type="ECO:0007744" key="14">
    <source>
    </source>
</evidence>
<gene>
    <name evidence="10" type="primary">LRIF1</name>
    <name evidence="10" type="synonym">C1orf103</name>
    <name evidence="7" type="synonym">RIF1</name>
</gene>
<name>LRIF1_HUMAN</name>
<sequence>MSNNLRRVFLKPAEENSGNASRCVSGCMYQVVQTIGSDGKNLLQLLPIPKSSGNLIPLVQSSVMSDALKGNTGKPVQVTFQTQISSSSTSASVQLPIFQPASSSNYFLTRTVDTSEKGRVTSVGTGNFSSSVSKVQSHGVKIDGLTMQTFAVPPSTQKDSSFIVVNTQSLPVTVKSPVLPSGHHLQIPAHAEVKSVPASSLPPSVQQKILATATTSTSGMVEASQMPTVIYVSPVNTVKNVVTKNFQNIYPKPVTEIAKPVILNTTQIPKNVATETQLKGGQHSQAAPVKWIFQDNLQPFTPSLVPVKSSNNVASKILKTFVDRKNLGDNTINMPPLSTIDPSGTRSKNMPIKDNALVMFNGKVYLLAKKGTDVLPSQIDQQNSVSPDTPVRKDTLQTVSSSPVTEISREVVNIVLAKSKSSQMETKSLSNTQLASMANLRAEKNKVEKPSPSTTNPHMNQSSNYLKQSKTLFTNPIFPVGFSTGHNAPRKVTAVIYARKGSVLQSIEKISSSVDATTVTSQQCVFRDQEPKIHNEMASTSDKGAQGRNDKKDSQGRSNKALHLKSDAEFKKIFGLTKDLRVCLTRIPDHLTSGEGFDSFSSLVKSGTYKETEFMVKEGERKQQNFDKKRKAKTNKKMDHIKKRKTENAYNAIINGEANVTGSQLLSSILPTSDVSQHNILTSHSKTRQEKRTEMEYYTHEKQEKGTLNSNAAYEQSHFFNKNYTEDIFPVTPPELEETIRDEKIRRLKQVLREKEAALEEMRKKMHQK</sequence>
<dbReference type="EMBL" id="AY190122">
    <property type="protein sequence ID" value="AAO43631.1"/>
    <property type="status" value="ALT_FRAME"/>
    <property type="molecule type" value="mRNA"/>
</dbReference>
<dbReference type="EMBL" id="AK001826">
    <property type="protein sequence ID" value="BAA91928.1"/>
    <property type="molecule type" value="mRNA"/>
</dbReference>
<dbReference type="EMBL" id="AK002131">
    <property type="protein sequence ID" value="BAA92097.1"/>
    <property type="status" value="ALT_FRAME"/>
    <property type="molecule type" value="mRNA"/>
</dbReference>
<dbReference type="EMBL" id="AL360270">
    <property type="status" value="NOT_ANNOTATED_CDS"/>
    <property type="molecule type" value="Genomic_DNA"/>
</dbReference>
<dbReference type="EMBL" id="BC008115">
    <property type="protein sequence ID" value="AAH08115.1"/>
    <property type="status" value="ALT_INIT"/>
    <property type="molecule type" value="mRNA"/>
</dbReference>
<dbReference type="EMBL" id="AL834466">
    <property type="protein sequence ID" value="CAD39125.1"/>
    <property type="molecule type" value="mRNA"/>
</dbReference>
<dbReference type="CCDS" id="CCDS30800.1">
    <molecule id="Q5T3J3-1"/>
</dbReference>
<dbReference type="CCDS" id="CCDS41366.1">
    <molecule id="Q5T3J3-2"/>
</dbReference>
<dbReference type="RefSeq" id="NP_001006946.1">
    <molecule id="Q5T3J3-2"/>
    <property type="nucleotide sequence ID" value="NM_001006945.2"/>
</dbReference>
<dbReference type="RefSeq" id="NP_060842.3">
    <molecule id="Q5T3J3-1"/>
    <property type="nucleotide sequence ID" value="NM_018372.3"/>
</dbReference>
<dbReference type="SMR" id="Q5T3J3"/>
<dbReference type="BioGRID" id="120905">
    <property type="interactions" value="246"/>
</dbReference>
<dbReference type="FunCoup" id="Q5T3J3">
    <property type="interactions" value="1751"/>
</dbReference>
<dbReference type="IntAct" id="Q5T3J3">
    <property type="interactions" value="153"/>
</dbReference>
<dbReference type="MINT" id="Q5T3J3"/>
<dbReference type="STRING" id="9606.ENSP00000358778"/>
<dbReference type="GlyCosmos" id="Q5T3J3">
    <property type="glycosylation" value="7 sites, 2 glycans"/>
</dbReference>
<dbReference type="GlyGen" id="Q5T3J3">
    <property type="glycosylation" value="12 sites, 2 O-linked glycans (11 sites)"/>
</dbReference>
<dbReference type="iPTMnet" id="Q5T3J3"/>
<dbReference type="PhosphoSitePlus" id="Q5T3J3"/>
<dbReference type="BioMuta" id="LRIF1"/>
<dbReference type="DMDM" id="74744778"/>
<dbReference type="jPOST" id="Q5T3J3"/>
<dbReference type="MassIVE" id="Q5T3J3"/>
<dbReference type="PaxDb" id="9606-ENSP00000358778"/>
<dbReference type="PeptideAtlas" id="Q5T3J3"/>
<dbReference type="ProteomicsDB" id="64403">
    <molecule id="Q5T3J3-1"/>
</dbReference>
<dbReference type="ProteomicsDB" id="64404">
    <molecule id="Q5T3J3-2"/>
</dbReference>
<dbReference type="Pumba" id="Q5T3J3"/>
<dbReference type="Antibodypedia" id="33789">
    <property type="antibodies" value="92 antibodies from 18 providers"/>
</dbReference>
<dbReference type="DNASU" id="55791"/>
<dbReference type="Ensembl" id="ENST00000369763.5">
    <molecule id="Q5T3J3-1"/>
    <property type="protein sequence ID" value="ENSP00000358778.4"/>
    <property type="gene ID" value="ENSG00000121931.16"/>
</dbReference>
<dbReference type="Ensembl" id="ENST00000485275.2">
    <molecule id="Q5T3J3-2"/>
    <property type="protein sequence ID" value="ENSP00000432290.1"/>
    <property type="gene ID" value="ENSG00000121931.16"/>
</dbReference>
<dbReference type="Ensembl" id="ENST00000494675.5">
    <molecule id="Q5T3J3-2"/>
    <property type="protein sequence ID" value="ENSP00000435259.1"/>
    <property type="gene ID" value="ENSG00000121931.16"/>
</dbReference>
<dbReference type="GeneID" id="55791"/>
<dbReference type="KEGG" id="hsa:55791"/>
<dbReference type="MANE-Select" id="ENST00000369763.5">
    <property type="protein sequence ID" value="ENSP00000358778.4"/>
    <property type="RefSeq nucleotide sequence ID" value="NM_018372.4"/>
    <property type="RefSeq protein sequence ID" value="NP_060842.3"/>
</dbReference>
<dbReference type="UCSC" id="uc001dzz.4">
    <molecule id="Q5T3J3-1"/>
    <property type="organism name" value="human"/>
</dbReference>
<dbReference type="AGR" id="HGNC:30299"/>
<dbReference type="CTD" id="55791"/>
<dbReference type="DisGeNET" id="55791"/>
<dbReference type="GeneCards" id="LRIF1"/>
<dbReference type="HGNC" id="HGNC:30299">
    <property type="gene designation" value="LRIF1"/>
</dbReference>
<dbReference type="HPA" id="ENSG00000121931">
    <property type="expression patterns" value="Low tissue specificity"/>
</dbReference>
<dbReference type="MalaCards" id="LRIF1"/>
<dbReference type="MIM" id="615354">
    <property type="type" value="gene"/>
</dbReference>
<dbReference type="MIM" id="619477">
    <property type="type" value="phenotype"/>
</dbReference>
<dbReference type="neXtProt" id="NX_Q5T3J3"/>
<dbReference type="OpenTargets" id="ENSG00000121931"/>
<dbReference type="PharmGKB" id="PA142672487"/>
<dbReference type="VEuPathDB" id="HostDB:ENSG00000121931"/>
<dbReference type="eggNOG" id="ENOG502QU1A">
    <property type="taxonomic scope" value="Eukaryota"/>
</dbReference>
<dbReference type="GeneTree" id="ENSGT00390000017353"/>
<dbReference type="HOGENOM" id="CLU_020634_0_0_1"/>
<dbReference type="InParanoid" id="Q5T3J3"/>
<dbReference type="OMA" id="ERNDKNH"/>
<dbReference type="OrthoDB" id="9944055at2759"/>
<dbReference type="PAN-GO" id="Q5T3J3">
    <property type="GO annotations" value="0 GO annotations based on evolutionary models"/>
</dbReference>
<dbReference type="PhylomeDB" id="Q5T3J3"/>
<dbReference type="TreeFam" id="TF336147"/>
<dbReference type="PathwayCommons" id="Q5T3J3"/>
<dbReference type="SignaLink" id="Q5T3J3"/>
<dbReference type="BioGRID-ORCS" id="55791">
    <property type="hits" value="19 hits in 1158 CRISPR screens"/>
</dbReference>
<dbReference type="ChiTaRS" id="LRIF1">
    <property type="organism name" value="human"/>
</dbReference>
<dbReference type="GeneWiki" id="C1orf103"/>
<dbReference type="GenomeRNAi" id="55791"/>
<dbReference type="Pharos" id="Q5T3J3">
    <property type="development level" value="Tdark"/>
</dbReference>
<dbReference type="PRO" id="PR:Q5T3J3"/>
<dbReference type="Proteomes" id="UP000005640">
    <property type="component" value="Chromosome 1"/>
</dbReference>
<dbReference type="RNAct" id="Q5T3J3">
    <property type="molecule type" value="protein"/>
</dbReference>
<dbReference type="Bgee" id="ENSG00000121931">
    <property type="expression patterns" value="Expressed in calcaneal tendon and 187 other cell types or tissues"/>
</dbReference>
<dbReference type="GO" id="GO:0001740">
    <property type="term" value="C:Barr body"/>
    <property type="evidence" value="ECO:0000314"/>
    <property type="project" value="UniProtKB"/>
</dbReference>
<dbReference type="GO" id="GO:0034451">
    <property type="term" value="C:centriolar satellite"/>
    <property type="evidence" value="ECO:0000314"/>
    <property type="project" value="HPA"/>
</dbReference>
<dbReference type="GO" id="GO:0016363">
    <property type="term" value="C:nuclear matrix"/>
    <property type="evidence" value="ECO:0007669"/>
    <property type="project" value="UniProtKB-SubCell"/>
</dbReference>
<dbReference type="GO" id="GO:0005654">
    <property type="term" value="C:nucleoplasm"/>
    <property type="evidence" value="ECO:0000314"/>
    <property type="project" value="HPA"/>
</dbReference>
<dbReference type="GO" id="GO:0042974">
    <property type="term" value="F:nuclear retinoic acid receptor binding"/>
    <property type="evidence" value="ECO:0007669"/>
    <property type="project" value="InterPro"/>
</dbReference>
<dbReference type="GO" id="GO:0009048">
    <property type="term" value="P:dosage compensation by inactivation of X chromosome"/>
    <property type="evidence" value="ECO:0000315"/>
    <property type="project" value="UniProtKB"/>
</dbReference>
<dbReference type="GO" id="GO:0006355">
    <property type="term" value="P:regulation of DNA-templated transcription"/>
    <property type="evidence" value="ECO:0007669"/>
    <property type="project" value="InterPro"/>
</dbReference>
<dbReference type="InterPro" id="IPR026191">
    <property type="entry name" value="LRIF1"/>
</dbReference>
<dbReference type="PANTHER" id="PTHR16131">
    <property type="entry name" value="LIGAND-DEPENDENT NUCLEAR RECEPTOR-INTERACTING FACTOR 1"/>
    <property type="match status" value="1"/>
</dbReference>
<dbReference type="PANTHER" id="PTHR16131:SF2">
    <property type="entry name" value="LIGAND-DEPENDENT NUCLEAR RECEPTOR-INTERACTING FACTOR 1"/>
    <property type="match status" value="1"/>
</dbReference>
<dbReference type="Pfam" id="PF15741">
    <property type="entry name" value="LRIF1"/>
    <property type="match status" value="1"/>
</dbReference>
<reference key="1">
    <citation type="submission" date="2002-12" db="EMBL/GenBank/DDBJ databases">
        <title>Identification of a transcriptional inhibitory factor for retinoic acid receptor.</title>
        <authorList>
            <person name="Li H."/>
            <person name="Leo C."/>
            <person name="Chen A."/>
            <person name="Chen J.D."/>
        </authorList>
    </citation>
    <scope>NUCLEOTIDE SEQUENCE [MRNA] (ISOFORM 1)</scope>
</reference>
<reference key="2">
    <citation type="journal article" date="2004" name="Nat. Genet.">
        <title>Complete sequencing and characterization of 21,243 full-length human cDNAs.</title>
        <authorList>
            <person name="Ota T."/>
            <person name="Suzuki Y."/>
            <person name="Nishikawa T."/>
            <person name="Otsuki T."/>
            <person name="Sugiyama T."/>
            <person name="Irie R."/>
            <person name="Wakamatsu A."/>
            <person name="Hayashi K."/>
            <person name="Sato H."/>
            <person name="Nagai K."/>
            <person name="Kimura K."/>
            <person name="Makita H."/>
            <person name="Sekine M."/>
            <person name="Obayashi M."/>
            <person name="Nishi T."/>
            <person name="Shibahara T."/>
            <person name="Tanaka T."/>
            <person name="Ishii S."/>
            <person name="Yamamoto J."/>
            <person name="Saito K."/>
            <person name="Kawai Y."/>
            <person name="Isono Y."/>
            <person name="Nakamura Y."/>
            <person name="Nagahari K."/>
            <person name="Murakami K."/>
            <person name="Yasuda T."/>
            <person name="Iwayanagi T."/>
            <person name="Wagatsuma M."/>
            <person name="Shiratori A."/>
            <person name="Sudo H."/>
            <person name="Hosoiri T."/>
            <person name="Kaku Y."/>
            <person name="Kodaira H."/>
            <person name="Kondo H."/>
            <person name="Sugawara M."/>
            <person name="Takahashi M."/>
            <person name="Kanda K."/>
            <person name="Yokoi T."/>
            <person name="Furuya T."/>
            <person name="Kikkawa E."/>
            <person name="Omura Y."/>
            <person name="Abe K."/>
            <person name="Kamihara K."/>
            <person name="Katsuta N."/>
            <person name="Sato K."/>
            <person name="Tanikawa M."/>
            <person name="Yamazaki M."/>
            <person name="Ninomiya K."/>
            <person name="Ishibashi T."/>
            <person name="Yamashita H."/>
            <person name="Murakawa K."/>
            <person name="Fujimori K."/>
            <person name="Tanai H."/>
            <person name="Kimata M."/>
            <person name="Watanabe M."/>
            <person name="Hiraoka S."/>
            <person name="Chiba Y."/>
            <person name="Ishida S."/>
            <person name="Ono Y."/>
            <person name="Takiguchi S."/>
            <person name="Watanabe S."/>
            <person name="Yosida M."/>
            <person name="Hotuta T."/>
            <person name="Kusano J."/>
            <person name="Kanehori K."/>
            <person name="Takahashi-Fujii A."/>
            <person name="Hara H."/>
            <person name="Tanase T.-O."/>
            <person name="Nomura Y."/>
            <person name="Togiya S."/>
            <person name="Komai F."/>
            <person name="Hara R."/>
            <person name="Takeuchi K."/>
            <person name="Arita M."/>
            <person name="Imose N."/>
            <person name="Musashino K."/>
            <person name="Yuuki H."/>
            <person name="Oshima A."/>
            <person name="Sasaki N."/>
            <person name="Aotsuka S."/>
            <person name="Yoshikawa Y."/>
            <person name="Matsunawa H."/>
            <person name="Ichihara T."/>
            <person name="Shiohata N."/>
            <person name="Sano S."/>
            <person name="Moriya S."/>
            <person name="Momiyama H."/>
            <person name="Satoh N."/>
            <person name="Takami S."/>
            <person name="Terashima Y."/>
            <person name="Suzuki O."/>
            <person name="Nakagawa S."/>
            <person name="Senoh A."/>
            <person name="Mizoguchi H."/>
            <person name="Goto Y."/>
            <person name="Shimizu F."/>
            <person name="Wakebe H."/>
            <person name="Hishigaki H."/>
            <person name="Watanabe T."/>
            <person name="Sugiyama A."/>
            <person name="Takemoto M."/>
            <person name="Kawakami B."/>
            <person name="Yamazaki M."/>
            <person name="Watanabe K."/>
            <person name="Kumagai A."/>
            <person name="Itakura S."/>
            <person name="Fukuzumi Y."/>
            <person name="Fujimori Y."/>
            <person name="Komiyama M."/>
            <person name="Tashiro H."/>
            <person name="Tanigami A."/>
            <person name="Fujiwara T."/>
            <person name="Ono T."/>
            <person name="Yamada K."/>
            <person name="Fujii Y."/>
            <person name="Ozaki K."/>
            <person name="Hirao M."/>
            <person name="Ohmori Y."/>
            <person name="Kawabata A."/>
            <person name="Hikiji T."/>
            <person name="Kobatake N."/>
            <person name="Inagaki H."/>
            <person name="Ikema Y."/>
            <person name="Okamoto S."/>
            <person name="Okitani R."/>
            <person name="Kawakami T."/>
            <person name="Noguchi S."/>
            <person name="Itoh T."/>
            <person name="Shigeta K."/>
            <person name="Senba T."/>
            <person name="Matsumura K."/>
            <person name="Nakajima Y."/>
            <person name="Mizuno T."/>
            <person name="Morinaga M."/>
            <person name="Sasaki M."/>
            <person name="Togashi T."/>
            <person name="Oyama M."/>
            <person name="Hata H."/>
            <person name="Watanabe M."/>
            <person name="Komatsu T."/>
            <person name="Mizushima-Sugano J."/>
            <person name="Satoh T."/>
            <person name="Shirai Y."/>
            <person name="Takahashi Y."/>
            <person name="Nakagawa K."/>
            <person name="Okumura K."/>
            <person name="Nagase T."/>
            <person name="Nomura N."/>
            <person name="Kikuchi H."/>
            <person name="Masuho Y."/>
            <person name="Yamashita R."/>
            <person name="Nakai K."/>
            <person name="Yada T."/>
            <person name="Nakamura Y."/>
            <person name="Ohara O."/>
            <person name="Isogai T."/>
            <person name="Sugano S."/>
        </authorList>
    </citation>
    <scope>NUCLEOTIDE SEQUENCE [LARGE SCALE MRNA] (ISOFORM 2)</scope>
    <scope>NUCLEOTIDE SEQUENCE [LARGE SCALE MRNA] OF 269-769 (ISOFORM 1)</scope>
    <source>
        <tissue>Placenta</tissue>
    </source>
</reference>
<reference key="3">
    <citation type="journal article" date="2006" name="Nature">
        <title>The DNA sequence and biological annotation of human chromosome 1.</title>
        <authorList>
            <person name="Gregory S.G."/>
            <person name="Barlow K.F."/>
            <person name="McLay K.E."/>
            <person name="Kaul R."/>
            <person name="Swarbreck D."/>
            <person name="Dunham A."/>
            <person name="Scott C.E."/>
            <person name="Howe K.L."/>
            <person name="Woodfine K."/>
            <person name="Spencer C.C.A."/>
            <person name="Jones M.C."/>
            <person name="Gillson C."/>
            <person name="Searle S."/>
            <person name="Zhou Y."/>
            <person name="Kokocinski F."/>
            <person name="McDonald L."/>
            <person name="Evans R."/>
            <person name="Phillips K."/>
            <person name="Atkinson A."/>
            <person name="Cooper R."/>
            <person name="Jones C."/>
            <person name="Hall R.E."/>
            <person name="Andrews T.D."/>
            <person name="Lloyd C."/>
            <person name="Ainscough R."/>
            <person name="Almeida J.P."/>
            <person name="Ambrose K.D."/>
            <person name="Anderson F."/>
            <person name="Andrew R.W."/>
            <person name="Ashwell R.I.S."/>
            <person name="Aubin K."/>
            <person name="Babbage A.K."/>
            <person name="Bagguley C.L."/>
            <person name="Bailey J."/>
            <person name="Beasley H."/>
            <person name="Bethel G."/>
            <person name="Bird C.P."/>
            <person name="Bray-Allen S."/>
            <person name="Brown J.Y."/>
            <person name="Brown A.J."/>
            <person name="Buckley D."/>
            <person name="Burton J."/>
            <person name="Bye J."/>
            <person name="Carder C."/>
            <person name="Chapman J.C."/>
            <person name="Clark S.Y."/>
            <person name="Clarke G."/>
            <person name="Clee C."/>
            <person name="Cobley V."/>
            <person name="Collier R.E."/>
            <person name="Corby N."/>
            <person name="Coville G.J."/>
            <person name="Davies J."/>
            <person name="Deadman R."/>
            <person name="Dunn M."/>
            <person name="Earthrowl M."/>
            <person name="Ellington A.G."/>
            <person name="Errington H."/>
            <person name="Frankish A."/>
            <person name="Frankland J."/>
            <person name="French L."/>
            <person name="Garner P."/>
            <person name="Garnett J."/>
            <person name="Gay L."/>
            <person name="Ghori M.R.J."/>
            <person name="Gibson R."/>
            <person name="Gilby L.M."/>
            <person name="Gillett W."/>
            <person name="Glithero R.J."/>
            <person name="Grafham D.V."/>
            <person name="Griffiths C."/>
            <person name="Griffiths-Jones S."/>
            <person name="Grocock R."/>
            <person name="Hammond S."/>
            <person name="Harrison E.S.I."/>
            <person name="Hart E."/>
            <person name="Haugen E."/>
            <person name="Heath P.D."/>
            <person name="Holmes S."/>
            <person name="Holt K."/>
            <person name="Howden P.J."/>
            <person name="Hunt A.R."/>
            <person name="Hunt S.E."/>
            <person name="Hunter G."/>
            <person name="Isherwood J."/>
            <person name="James R."/>
            <person name="Johnson C."/>
            <person name="Johnson D."/>
            <person name="Joy A."/>
            <person name="Kay M."/>
            <person name="Kershaw J.K."/>
            <person name="Kibukawa M."/>
            <person name="Kimberley A.M."/>
            <person name="King A."/>
            <person name="Knights A.J."/>
            <person name="Lad H."/>
            <person name="Laird G."/>
            <person name="Lawlor S."/>
            <person name="Leongamornlert D.A."/>
            <person name="Lloyd D.M."/>
            <person name="Loveland J."/>
            <person name="Lovell J."/>
            <person name="Lush M.J."/>
            <person name="Lyne R."/>
            <person name="Martin S."/>
            <person name="Mashreghi-Mohammadi M."/>
            <person name="Matthews L."/>
            <person name="Matthews N.S.W."/>
            <person name="McLaren S."/>
            <person name="Milne S."/>
            <person name="Mistry S."/>
            <person name="Moore M.J.F."/>
            <person name="Nickerson T."/>
            <person name="O'Dell C.N."/>
            <person name="Oliver K."/>
            <person name="Palmeiri A."/>
            <person name="Palmer S.A."/>
            <person name="Parker A."/>
            <person name="Patel D."/>
            <person name="Pearce A.V."/>
            <person name="Peck A.I."/>
            <person name="Pelan S."/>
            <person name="Phelps K."/>
            <person name="Phillimore B.J."/>
            <person name="Plumb R."/>
            <person name="Rajan J."/>
            <person name="Raymond C."/>
            <person name="Rouse G."/>
            <person name="Saenphimmachak C."/>
            <person name="Sehra H.K."/>
            <person name="Sheridan E."/>
            <person name="Shownkeen R."/>
            <person name="Sims S."/>
            <person name="Skuce C.D."/>
            <person name="Smith M."/>
            <person name="Steward C."/>
            <person name="Subramanian S."/>
            <person name="Sycamore N."/>
            <person name="Tracey A."/>
            <person name="Tromans A."/>
            <person name="Van Helmond Z."/>
            <person name="Wall M."/>
            <person name="Wallis J.M."/>
            <person name="White S."/>
            <person name="Whitehead S.L."/>
            <person name="Wilkinson J.E."/>
            <person name="Willey D.L."/>
            <person name="Williams H."/>
            <person name="Wilming L."/>
            <person name="Wray P.W."/>
            <person name="Wu Z."/>
            <person name="Coulson A."/>
            <person name="Vaudin M."/>
            <person name="Sulston J.E."/>
            <person name="Durbin R.M."/>
            <person name="Hubbard T."/>
            <person name="Wooster R."/>
            <person name="Dunham I."/>
            <person name="Carter N.P."/>
            <person name="McVean G."/>
            <person name="Ross M.T."/>
            <person name="Harrow J."/>
            <person name="Olson M.V."/>
            <person name="Beck S."/>
            <person name="Rogers J."/>
            <person name="Bentley D.R."/>
        </authorList>
    </citation>
    <scope>NUCLEOTIDE SEQUENCE [LARGE SCALE GENOMIC DNA]</scope>
</reference>
<reference key="4">
    <citation type="journal article" date="2007" name="J. Cell. Biochem.">
        <title>RIF-1, a novel nuclear receptor corepressor that associates with the nuclear matrix.</title>
        <authorList>
            <person name="Li H.J."/>
            <person name="Haque Z.K."/>
            <person name="Chen A."/>
            <person name="Mendelsohn M."/>
        </authorList>
    </citation>
    <scope>NUCLEOTIDE SEQUENCE [MRNA] OF 28-769 (ISOFORM 1)</scope>
    <scope>FUNCTION</scope>
    <scope>SUBCELLULAR LOCATION</scope>
    <scope>TISSUE SPECIFICITY</scope>
    <scope>MUTAGENESIS</scope>
    <scope>NUCLEAR LOCALIZATION SIGNAL</scope>
    <scope>INTERACTION WITH RARA</scope>
</reference>
<reference key="5">
    <citation type="journal article" date="2004" name="Genome Res.">
        <title>The status, quality, and expansion of the NIH full-length cDNA project: the Mammalian Gene Collection (MGC).</title>
        <authorList>
            <consortium name="The MGC Project Team"/>
        </authorList>
    </citation>
    <scope>NUCLEOTIDE SEQUENCE [LARGE SCALE MRNA] OF 202-769 (ISOFORM 1)</scope>
    <source>
        <tissue>Placenta</tissue>
    </source>
</reference>
<reference key="6">
    <citation type="journal article" date="2007" name="BMC Genomics">
        <title>The full-ORF clone resource of the German cDNA consortium.</title>
        <authorList>
            <person name="Bechtel S."/>
            <person name="Rosenfelder H."/>
            <person name="Duda A."/>
            <person name="Schmidt C.P."/>
            <person name="Ernst U."/>
            <person name="Wellenreuther R."/>
            <person name="Mehrle A."/>
            <person name="Schuster C."/>
            <person name="Bahr A."/>
            <person name="Bloecker H."/>
            <person name="Heubner D."/>
            <person name="Hoerlein A."/>
            <person name="Michel G."/>
            <person name="Wedler H."/>
            <person name="Koehrer K."/>
            <person name="Ottenwaelder B."/>
            <person name="Poustka A."/>
            <person name="Wiemann S."/>
            <person name="Schupp I."/>
        </authorList>
    </citation>
    <scope>NUCLEOTIDE SEQUENCE [LARGE SCALE MRNA] OF 277-769 (ISOFORM 1)</scope>
    <source>
        <tissue>Melanoma</tissue>
    </source>
</reference>
<reference key="7">
    <citation type="journal article" date="2008" name="Mol. Cell">
        <title>Kinase-selective enrichment enables quantitative phosphoproteomics of the kinome across the cell cycle.</title>
        <authorList>
            <person name="Daub H."/>
            <person name="Olsen J.V."/>
            <person name="Bairlein M."/>
            <person name="Gnad F."/>
            <person name="Oppermann F.S."/>
            <person name="Korner R."/>
            <person name="Greff Z."/>
            <person name="Keri G."/>
            <person name="Stemmann O."/>
            <person name="Mann M."/>
        </authorList>
    </citation>
    <scope>IDENTIFICATION BY MASS SPECTROMETRY [LARGE SCALE ANALYSIS]</scope>
    <source>
        <tissue>Cervix carcinoma</tissue>
    </source>
</reference>
<reference key="8">
    <citation type="journal article" date="2008" name="Proc. Natl. Acad. Sci. U.S.A.">
        <title>A quantitative atlas of mitotic phosphorylation.</title>
        <authorList>
            <person name="Dephoure N."/>
            <person name="Zhou C."/>
            <person name="Villen J."/>
            <person name="Beausoleil S.A."/>
            <person name="Bakalarski C.E."/>
            <person name="Elledge S.J."/>
            <person name="Gygi S.P."/>
        </authorList>
    </citation>
    <scope>PHOSPHORYLATION [LARGE SCALE ANALYSIS] AT SER-402; SER-599 AND THR-732</scope>
    <scope>IDENTIFICATION BY MASS SPECTROMETRY [LARGE SCALE ANALYSIS]</scope>
    <source>
        <tissue>Cervix carcinoma</tissue>
    </source>
</reference>
<reference key="9">
    <citation type="journal article" date="2010" name="Sci. Signal.">
        <title>Quantitative phosphoproteomics reveals widespread full phosphorylation site occupancy during mitosis.</title>
        <authorList>
            <person name="Olsen J.V."/>
            <person name="Vermeulen M."/>
            <person name="Santamaria A."/>
            <person name="Kumar C."/>
            <person name="Miller M.L."/>
            <person name="Jensen L.J."/>
            <person name="Gnad F."/>
            <person name="Cox J."/>
            <person name="Jensen T.S."/>
            <person name="Nigg E.A."/>
            <person name="Brunak S."/>
            <person name="Mann M."/>
        </authorList>
    </citation>
    <scope>IDENTIFICATION BY MASS SPECTROMETRY [LARGE SCALE ANALYSIS]</scope>
    <source>
        <tissue>Cervix carcinoma</tissue>
    </source>
</reference>
<reference key="10">
    <citation type="journal article" date="2012" name="Proc. Natl. Acad. Sci. U.S.A.">
        <title>N-terminal acetylome analyses and functional insights of the N-terminal acetyltransferase NatB.</title>
        <authorList>
            <person name="Van Damme P."/>
            <person name="Lasa M."/>
            <person name="Polevoda B."/>
            <person name="Gazquez C."/>
            <person name="Elosegui-Artola A."/>
            <person name="Kim D.S."/>
            <person name="De Juan-Pardo E."/>
            <person name="Demeyer K."/>
            <person name="Hole K."/>
            <person name="Larrea E."/>
            <person name="Timmerman E."/>
            <person name="Prieto J."/>
            <person name="Arnesen T."/>
            <person name="Sherman F."/>
            <person name="Gevaert K."/>
            <person name="Aldabe R."/>
        </authorList>
    </citation>
    <scope>IDENTIFICATION BY MASS SPECTROMETRY [LARGE SCALE ANALYSIS]</scope>
</reference>
<reference key="11">
    <citation type="journal article" date="2013" name="J. Proteome Res.">
        <title>Toward a comprehensive characterization of a human cancer cell phosphoproteome.</title>
        <authorList>
            <person name="Zhou H."/>
            <person name="Di Palma S."/>
            <person name="Preisinger C."/>
            <person name="Peng M."/>
            <person name="Polat A.N."/>
            <person name="Heck A.J."/>
            <person name="Mohammed S."/>
        </authorList>
    </citation>
    <scope>PHOSPHORYLATION [LARGE SCALE ANALYSIS] AT SER-430; SER-436; SER-502 AND SER-599</scope>
    <scope>IDENTIFICATION BY MASS SPECTROMETRY [LARGE SCALE ANALYSIS]</scope>
    <source>
        <tissue>Cervix carcinoma</tissue>
        <tissue>Erythroleukemia</tissue>
    </source>
</reference>
<reference key="12">
    <citation type="journal article" date="2013" name="Nat. Struct. Mol. Biol.">
        <title>Human inactive X chromosome is compacted through a PRC2-independent SMCHD1-HBiX1 pathway.</title>
        <authorList>
            <person name="Nozawa R.S."/>
            <person name="Nagao K."/>
            <person name="Igami K.T."/>
            <person name="Shibata S."/>
            <person name="Shirai N."/>
            <person name="Nozaki N."/>
            <person name="Sado T."/>
            <person name="Kimura H."/>
            <person name="Obuse C."/>
        </authorList>
    </citation>
    <scope>FUNCTION</scope>
    <scope>SUBCELLULAR LOCATION</scope>
    <scope>INTERACTION WITH CBX1; CBX3; CBX5 AND SMCHD1</scope>
    <scope>MUTAGENESIS OF 582-VAL--LEU-584</scope>
</reference>
<reference key="13">
    <citation type="journal article" date="2014" name="Nat. Struct. Mol. Biol.">
        <title>Uncovering global SUMOylation signaling networks in a site-specific manner.</title>
        <authorList>
            <person name="Hendriks I.A."/>
            <person name="D'Souza R.C."/>
            <person name="Yang B."/>
            <person name="Verlaan-de Vries M."/>
            <person name="Mann M."/>
            <person name="Vertegaal A.C."/>
        </authorList>
    </citation>
    <scope>SUMOYLATION [LARGE SCALE ANALYSIS] AT LYS-702</scope>
    <scope>IDENTIFICATION BY MASS SPECTROMETRY [LARGE SCALE ANALYSIS]</scope>
</reference>
<reference key="14">
    <citation type="journal article" date="2017" name="Nat. Struct. Mol. Biol.">
        <title>Site-specific mapping of the human SUMO proteome reveals co-modification with phosphorylation.</title>
        <authorList>
            <person name="Hendriks I.A."/>
            <person name="Lyon D."/>
            <person name="Young C."/>
            <person name="Jensen L.J."/>
            <person name="Vertegaal A.C."/>
            <person name="Nielsen M.L."/>
        </authorList>
    </citation>
    <scope>SUMOYLATION [LARGE SCALE ANALYSIS] AT LYS-259; LYS-279; LYS-446 AND LYS-605</scope>
    <scope>IDENTIFICATION BY MASS SPECTROMETRY [LARGE SCALE ANALYSIS]</scope>
</reference>
<reference key="15">
    <citation type="journal article" date="2020" name="Neurology">
        <title>Homozygous nonsense variant in LRIF1 associated with facioscapulohumeral muscular dystrophy.</title>
        <authorList>
            <person name="Hamanaka K."/>
            <person name="Sikrova D."/>
            <person name="Mitsuhashi S."/>
            <person name="Masuda H."/>
            <person name="Sekiguchi Y."/>
            <person name="Sugiyama A."/>
            <person name="Shibuya K."/>
            <person name="Lemmers R.J.L.F."/>
            <person name="Goossens R."/>
            <person name="Ogawa M."/>
            <person name="Nagao K."/>
            <person name="Obuse C."/>
            <person name="Noguchi S."/>
            <person name="Hayashi Y.K."/>
            <person name="Kuwabara S."/>
            <person name="Balog J."/>
            <person name="Nishino I."/>
            <person name="van der Maarel S.M."/>
        </authorList>
    </citation>
    <scope>FUNCTION</scope>
    <scope>INVOLVEMENT IN FSHD3</scope>
</reference>
<organism>
    <name type="scientific">Homo sapiens</name>
    <name type="common">Human</name>
    <dbReference type="NCBI Taxonomy" id="9606"/>
    <lineage>
        <taxon>Eukaryota</taxon>
        <taxon>Metazoa</taxon>
        <taxon>Chordata</taxon>
        <taxon>Craniata</taxon>
        <taxon>Vertebrata</taxon>
        <taxon>Euteleostomi</taxon>
        <taxon>Mammalia</taxon>
        <taxon>Eutheria</taxon>
        <taxon>Euarchontoglires</taxon>
        <taxon>Primates</taxon>
        <taxon>Haplorrhini</taxon>
        <taxon>Catarrhini</taxon>
        <taxon>Hominidae</taxon>
        <taxon>Homo</taxon>
    </lineage>
</organism>
<keyword id="KW-0025">Alternative splicing</keyword>
<keyword id="KW-0158">Chromosome</keyword>
<keyword id="KW-0175">Coiled coil</keyword>
<keyword id="KW-1017">Isopeptide bond</keyword>
<keyword id="KW-0539">Nucleus</keyword>
<keyword id="KW-0597">Phosphoprotein</keyword>
<keyword id="KW-1267">Proteomics identification</keyword>
<keyword id="KW-1185">Reference proteome</keyword>
<keyword id="KW-0678">Repressor</keyword>
<keyword id="KW-0804">Transcription</keyword>
<keyword id="KW-0805">Transcription regulation</keyword>
<keyword id="KW-0832">Ubl conjugation</keyword>
<comment type="function">
    <text evidence="3 4 5">Together with SMCHD1, involved in chromosome X inactivation in females by promoting the compaction of heterochromatin (PubMed:23542155). Also able to repress the ligand-induced transcriptional activity of retinoic acid receptor alpha (RARA), possibly through direct recruitment of histone deacetylases (PubMed:17455211). Also required for silencing of the DUX4 locus in somatic cells (PubMed:32467133).</text>
</comment>
<comment type="subunit">
    <text evidence="3 4">Interacts with RARA (PubMed:17455211). Interacts with SMCHD1; leading to recruitment to inactivated chromosome X in females (PubMed:23542155). Interacts (via PxVxL motif) with HP1 (CBX1/HP1-beta, CBX3/HP1-gamma and CBX5/HP1-alpha) (PubMed:23542155).</text>
</comment>
<comment type="interaction">
    <interactant intactId="EBI-473196">
        <id>Q5T3J3</id>
    </interactant>
    <interactant intactId="EBI-11524452">
        <id>Q8N9N5-2</id>
        <label>BANP</label>
    </interactant>
    <organismsDiffer>false</organismsDiffer>
    <experiments>3</experiments>
</comment>
<comment type="interaction">
    <interactant intactId="EBI-473196">
        <id>Q5T3J3</id>
    </interactant>
    <interactant intactId="EBI-78176">
        <id>Q13185</id>
        <label>CBX3</label>
    </interactant>
    <organismsDiffer>false</organismsDiffer>
    <experiments>9</experiments>
</comment>
<comment type="interaction">
    <interactant intactId="EBI-473196">
        <id>Q5T3J3</id>
    </interactant>
    <interactant intactId="EBI-78219">
        <id>P45973</id>
        <label>CBX5</label>
    </interactant>
    <organismsDiffer>false</organismsDiffer>
    <experiments>11</experiments>
</comment>
<comment type="interaction">
    <interactant intactId="EBI-473196">
        <id>Q5T3J3</id>
    </interactant>
    <interactant intactId="EBI-739773">
        <id>Q9BSW2</id>
        <label>CRACR2A</label>
    </interactant>
    <organismsDiffer>false</organismsDiffer>
    <experiments>3</experiments>
</comment>
<comment type="interaction">
    <interactant intactId="EBI-473196">
        <id>Q5T3J3</id>
    </interactant>
    <interactant intactId="EBI-12880830">
        <id>O75575-2</id>
        <label>CRCP</label>
    </interactant>
    <organismsDiffer>false</organismsDiffer>
    <experiments>3</experiments>
</comment>
<comment type="interaction">
    <interactant intactId="EBI-473196">
        <id>Q5T3J3</id>
    </interactant>
    <interactant intactId="EBI-701903">
        <id>Q14192</id>
        <label>FHL2</label>
    </interactant>
    <organismsDiffer>false</organismsDiffer>
    <experiments>3</experiments>
</comment>
<comment type="interaction">
    <interactant intactId="EBI-473196">
        <id>Q5T3J3</id>
    </interactant>
    <interactant intactId="EBI-3893419">
        <id>P15408</id>
        <label>FOSL2</label>
    </interactant>
    <organismsDiffer>false</organismsDiffer>
    <experiments>3</experiments>
</comment>
<comment type="interaction">
    <interactant intactId="EBI-473196">
        <id>Q5T3J3</id>
    </interactant>
    <interactant intactId="EBI-6425864">
        <id>Q3SYB3</id>
        <label>FOXD4L6</label>
    </interactant>
    <organismsDiffer>false</organismsDiffer>
    <experiments>3</experiments>
</comment>
<comment type="interaction">
    <interactant intactId="EBI-473196">
        <id>Q5T3J3</id>
    </interactant>
    <interactant intactId="EBI-448202">
        <id>O95257</id>
        <label>GADD45G</label>
    </interactant>
    <organismsDiffer>false</organismsDiffer>
    <experiments>4</experiments>
</comment>
<comment type="interaction">
    <interactant intactId="EBI-473196">
        <id>Q5T3J3</id>
    </interactant>
    <interactant intactId="EBI-466061">
        <id>Q9Y2X7</id>
        <label>GIT1</label>
    </interactant>
    <organismsDiffer>false</organismsDiffer>
    <experiments>2</experiments>
</comment>
<comment type="interaction">
    <interactant intactId="EBI-473196">
        <id>Q5T3J3</id>
    </interactant>
    <interactant intactId="EBI-743960">
        <id>Q8N5Z5</id>
        <label>KCTD17</label>
    </interactant>
    <organismsDiffer>false</organismsDiffer>
    <experiments>3</experiments>
</comment>
<comment type="interaction">
    <interactant intactId="EBI-473196">
        <id>Q5T3J3</id>
    </interactant>
    <interactant intactId="EBI-8472267">
        <id>P57682</id>
        <label>KLF3</label>
    </interactant>
    <organismsDiffer>false</organismsDiffer>
    <experiments>3</experiments>
</comment>
<comment type="interaction">
    <interactant intactId="EBI-473196">
        <id>Q5T3J3</id>
    </interactant>
    <interactant intactId="EBI-741158">
        <id>Q96HA8</id>
        <label>NTAQ1</label>
    </interactant>
    <organismsDiffer>false</organismsDiffer>
    <experiments>3</experiments>
</comment>
<comment type="interaction">
    <interactant intactId="EBI-473196">
        <id>Q5T3J3</id>
    </interactant>
    <interactant intactId="EBI-1055079">
        <id>O15160</id>
        <label>POLR1C</label>
    </interactant>
    <organismsDiffer>false</organismsDiffer>
    <experiments>3</experiments>
</comment>
<comment type="interaction">
    <interactant intactId="EBI-473196">
        <id>Q5T3J3</id>
    </interactant>
    <interactant intactId="EBI-1053424">
        <id>O43741</id>
        <label>PRKAB2</label>
    </interactant>
    <organismsDiffer>false</organismsDiffer>
    <experiments>3</experiments>
</comment>
<comment type="interaction">
    <interactant intactId="EBI-473196">
        <id>Q5T3J3</id>
    </interactant>
    <interactant intactId="EBI-11752137">
        <id>P13861-2</id>
        <label>PRKAR2A</label>
    </interactant>
    <organismsDiffer>false</organismsDiffer>
    <experiments>3</experiments>
</comment>
<comment type="interaction">
    <interactant intactId="EBI-473196">
        <id>Q5T3J3</id>
    </interactant>
    <interactant intactId="EBI-12832276">
        <id>P08195-4</id>
        <label>SLC3A2</label>
    </interactant>
    <organismsDiffer>false</organismsDiffer>
    <experiments>3</experiments>
</comment>
<comment type="interaction">
    <interactant intactId="EBI-473196">
        <id>Q5T3J3</id>
    </interactant>
    <interactant intactId="EBI-2801919">
        <id>A6NHR9</id>
        <label>SMCHD1</label>
    </interactant>
    <organismsDiffer>false</organismsDiffer>
    <experiments>9</experiments>
</comment>
<comment type="interaction">
    <interactant intactId="EBI-473196">
        <id>Q5T3J3</id>
    </interactant>
    <interactant intactId="EBI-11334239">
        <id>Q8TC71</id>
        <label>SPATA18</label>
    </interactant>
    <organismsDiffer>false</organismsDiffer>
    <experiments>3</experiments>
</comment>
<comment type="interaction">
    <interactant intactId="EBI-473196">
        <id>Q5T3J3</id>
    </interactant>
    <interactant intactId="EBI-372432">
        <id>Q8WW01</id>
        <label>TSEN15</label>
    </interactant>
    <organismsDiffer>false</organismsDiffer>
    <experiments>3</experiments>
</comment>
<comment type="interaction">
    <interactant intactId="EBI-473196">
        <id>Q5T3J3</id>
    </interactant>
    <interactant intactId="EBI-711260">
        <id>Q13432</id>
        <label>UNC119</label>
    </interactant>
    <organismsDiffer>false</organismsDiffer>
    <experiments>3</experiments>
</comment>
<comment type="interaction">
    <interactant intactId="EBI-473196">
        <id>Q5T3J3</id>
    </interactant>
    <interactant intactId="EBI-7207091">
        <id>O14972</id>
        <label>VPS26C</label>
    </interactant>
    <organismsDiffer>false</organismsDiffer>
    <experiments>3</experiments>
</comment>
<comment type="interaction">
    <interactant intactId="EBI-473196">
        <id>Q5T3J3</id>
    </interactant>
    <interactant intactId="EBI-6427899">
        <id>P58304</id>
        <label>VSX2</label>
    </interactant>
    <organismsDiffer>false</organismsDiffer>
    <experiments>3</experiments>
</comment>
<comment type="interaction">
    <interactant intactId="EBI-473196">
        <id>Q5T3J3</id>
    </interactant>
    <interactant intactId="EBI-10176632">
        <id>O43829</id>
        <label>ZBTB14</label>
    </interactant>
    <organismsDiffer>false</organismsDiffer>
    <experiments>3</experiments>
</comment>
<comment type="interaction">
    <interactant intactId="EBI-473196">
        <id>Q5T3J3</id>
    </interactant>
    <interactant intactId="EBI-11741890">
        <id>Q86VK4-3</id>
        <label>ZNF410</label>
    </interactant>
    <organismsDiffer>false</organismsDiffer>
    <experiments>3</experiments>
</comment>
<comment type="subcellular location">
    <subcellularLocation>
        <location evidence="4">Chromosome</location>
    </subcellularLocation>
    <subcellularLocation>
        <location evidence="3">Nucleus matrix</location>
    </subcellularLocation>
    <text evidence="4">Localizes to Barr body; recruited by SMCHD1.</text>
</comment>
<comment type="alternative products">
    <event type="alternative splicing"/>
    <isoform>
        <id>Q5T3J3-1</id>
        <name>1</name>
        <sequence type="displayed"/>
    </isoform>
    <isoform>
        <id>Q5T3J3-2</id>
        <name>2</name>
        <sequence type="described" ref="VSP_020721"/>
    </isoform>
</comment>
<comment type="tissue specificity">
    <text evidence="3">Widely expressed, with the highest expression levels in heart, liver and placenta.</text>
</comment>
<comment type="domain">
    <text evidence="4">The Pro-Xaa-Val-Xaa-Leu (PxVxL) motif mediates interaction with HP1 (CBX1/HP1-beta, CBX3/HP1-gamma and CBX5/HP1-alpha).</text>
</comment>
<comment type="disease" evidence="5">
    <disease id="DI-06196">
        <name>Facioscapulohumeral muscular dystrophy 3, digenic</name>
        <acronym>FSHD3</acronym>
        <description>A form of facioscapulohumeral muscular dystrophy, a degenerative muscle disease characterized by slowly progressive weakness of the muscles of the face, upper-arm, and shoulder girdle. FSHD3 is a digenic form characterized by adult onset of proximal muscle weakness affecting the face, neck, scapular muscles, and upper and lower limbs. Muscle involvement is usually asymmetric, and other muscle groups may become involved with progression of the disease.</description>
        <dbReference type="MIM" id="619477"/>
    </disease>
    <text evidence="5">The disease is caused by variants affecting distinct genetic loci, including the gene represented in this entry. The disease is caused by a LRIF1 homozygous variant resulting in loss of isoform 1, in the presence of a haplotype on chromosome 4 permissive for chromatin relaxation of the D4Z4 macrosatellite and inappropriate DUX4 expression. Deregulated expression of DUX4 in skeletal muscle can lead to cell death.</text>
</comment>
<comment type="similarity">
    <text evidence="9">Belongs to the LRIF1 family.</text>
</comment>
<comment type="sequence caution" evidence="9">
    <conflict type="erroneous initiation">
        <sequence resource="EMBL-CDS" id="AAH08115"/>
    </conflict>
    <text>Truncated N-terminus.</text>
</comment>
<comment type="sequence caution" evidence="9">
    <conflict type="frameshift">
        <sequence resource="EMBL-CDS" id="AAO43631"/>
    </conflict>
</comment>
<comment type="sequence caution" evidence="9">
    <conflict type="frameshift">
        <sequence resource="EMBL-CDS" id="BAA92097"/>
    </conflict>
</comment>
<protein>
    <recommendedName>
        <fullName evidence="9">Ligand-dependent nuclear receptor-interacting factor 1</fullName>
    </recommendedName>
    <alternativeName>
        <fullName evidence="8">HP1-binding protein enriched in inactive X chromosome protein 1</fullName>
        <shortName evidence="8">HBiX1</shortName>
    </alternativeName>
    <alternativeName>
        <fullName evidence="7">Receptor-interacting factor 1</fullName>
    </alternativeName>
</protein>
<accession>Q5T3J3</accession>
<accession>Q86XS4</accession>
<accession>Q8N3B6</accession>
<accession>Q96HT4</accession>
<accession>Q9NUM5</accession>
<accession>Q9NV32</accession>
<feature type="chain" id="PRO_0000250686" description="Ligand-dependent nuclear receptor-interacting factor 1">
    <location>
        <begin position="1"/>
        <end position="769"/>
    </location>
</feature>
<feature type="region of interest" description="Disordered" evidence="2">
    <location>
        <begin position="378"/>
        <end position="400"/>
    </location>
</feature>
<feature type="region of interest" description="Disordered" evidence="2">
    <location>
        <begin position="528"/>
        <end position="562"/>
    </location>
</feature>
<feature type="coiled-coil region" evidence="1">
    <location>
        <begin position="740"/>
        <end position="769"/>
    </location>
</feature>
<feature type="short sequence motif" description="PxVxL motif" evidence="4">
    <location>
        <begin position="580"/>
        <end position="584"/>
    </location>
</feature>
<feature type="short sequence motif" description="Nuclear localization signal" evidence="3">
    <location>
        <begin position="628"/>
        <end position="631"/>
    </location>
</feature>
<feature type="short sequence motif" description="Nuclear localization signal" evidence="3">
    <location>
        <begin position="642"/>
        <end position="645"/>
    </location>
</feature>
<feature type="compositionally biased region" description="Polar residues" evidence="2">
    <location>
        <begin position="378"/>
        <end position="387"/>
    </location>
</feature>
<feature type="modified residue" description="Phosphoserine" evidence="11">
    <location>
        <position position="402"/>
    </location>
</feature>
<feature type="modified residue" description="Phosphoserine" evidence="12">
    <location>
        <position position="430"/>
    </location>
</feature>
<feature type="modified residue" description="Phosphoserine" evidence="12">
    <location>
        <position position="436"/>
    </location>
</feature>
<feature type="modified residue" description="Phosphoserine" evidence="12">
    <location>
        <position position="502"/>
    </location>
</feature>
<feature type="modified residue" description="Phosphoserine" evidence="11 12">
    <location>
        <position position="599"/>
    </location>
</feature>
<feature type="modified residue" description="Phosphothreonine" evidence="11">
    <location>
        <position position="732"/>
    </location>
</feature>
<feature type="cross-link" description="Glycyl lysine isopeptide (Lys-Gly) (interchain with G-Cter in SUMO2)" evidence="14">
    <location>
        <position position="259"/>
    </location>
</feature>
<feature type="cross-link" description="Glycyl lysine isopeptide (Lys-Gly) (interchain with G-Cter in SUMO2)" evidence="14">
    <location>
        <position position="279"/>
    </location>
</feature>
<feature type="cross-link" description="Glycyl lysine isopeptide (Lys-Gly) (interchain with G-Cter in SUMO2)" evidence="14">
    <location>
        <position position="446"/>
    </location>
</feature>
<feature type="cross-link" description="Glycyl lysine isopeptide (Lys-Gly) (interchain with G-Cter in SUMO2)" evidence="14">
    <location>
        <position position="605"/>
    </location>
</feature>
<feature type="cross-link" description="Glycyl lysine isopeptide (Lys-Gly) (interchain with G-Cter in SUMO2)" evidence="13">
    <location>
        <position position="702"/>
    </location>
</feature>
<feature type="splice variant" id="VSP_020721" description="In isoform 2." evidence="6">
    <location>
        <begin position="1"/>
        <end position="536"/>
    </location>
</feature>
<feature type="sequence variant" id="VAR_050703" description="In dbSNP:rs2232041.">
    <original>A</original>
    <variation>T</variation>
    <location>
        <position position="438"/>
    </location>
</feature>
<feature type="sequence variant" id="VAR_027599" description="In dbSNP:rs2232045.">
    <original>S</original>
    <variation>P</variation>
    <location>
        <position position="599"/>
    </location>
</feature>
<feature type="sequence variant" id="VAR_027600" description="In dbSNP:rs2232047.">
    <original>I</original>
    <variation>M</variation>
    <location>
        <position position="641"/>
    </location>
</feature>
<feature type="mutagenesis site" description="Abolishes interaction with HP1 (CBX1/HP1-beta, CBX3/HP1-gamma and CBX5/HP1-alpha)." evidence="4">
    <original>VCL</original>
    <variation>DCE</variation>
    <location>
        <begin position="582"/>
        <end position="584"/>
    </location>
</feature>
<feature type="mutagenesis site" description="Slightly reduces nuclear localization." evidence="3">
    <original>KKR</original>
    <variation>AAA</variation>
    <location>
        <begin position="628"/>
        <end position="630"/>
    </location>
</feature>
<feature type="mutagenesis site" description="Abolishes nuclear localization." evidence="3">
    <original>KKR</original>
    <variation>AAA</variation>
    <location>
        <begin position="642"/>
        <end position="644"/>
    </location>
</feature>
<feature type="sequence conflict" description="In Ref. 1; AAO43631." evidence="9" ref="1">
    <original>DAL</original>
    <variation>NA</variation>
    <location>
        <begin position="66"/>
        <end position="68"/>
    </location>
</feature>
<feature type="sequence conflict" description="In Ref. 1; AAO43631." evidence="9" ref="1">
    <original>TGKPVQVTF</original>
    <variation>PGNQFSY</variation>
    <location>
        <begin position="72"/>
        <end position="80"/>
    </location>
</feature>
<feature type="sequence conflict" description="In Ref. 1; AAO43631." evidence="9" ref="1">
    <original>LTRT</original>
    <variation>PSRP</variation>
    <location>
        <begin position="108"/>
        <end position="111"/>
    </location>
</feature>
<feature type="sequence conflict" description="In Ref. 2; BAA92097." evidence="9" ref="2">
    <location>
        <position position="666"/>
    </location>
</feature>